<dbReference type="EC" id="3.1.13.-" evidence="1"/>
<dbReference type="EMBL" id="AM286415">
    <property type="protein sequence ID" value="CAL12224.1"/>
    <property type="molecule type" value="Genomic_DNA"/>
</dbReference>
<dbReference type="RefSeq" id="WP_005169454.1">
    <property type="nucleotide sequence ID" value="NC_008800.1"/>
</dbReference>
<dbReference type="RefSeq" id="YP_001006394.1">
    <property type="nucleotide sequence ID" value="NC_008800.1"/>
</dbReference>
<dbReference type="SMR" id="A1JP36"/>
<dbReference type="KEGG" id="yen:YE2154"/>
<dbReference type="PATRIC" id="fig|393305.7.peg.2319"/>
<dbReference type="eggNOG" id="COG0847">
    <property type="taxonomic scope" value="Bacteria"/>
</dbReference>
<dbReference type="HOGENOM" id="CLU_082724_0_0_6"/>
<dbReference type="OrthoDB" id="9778264at2"/>
<dbReference type="Proteomes" id="UP000000642">
    <property type="component" value="Chromosome"/>
</dbReference>
<dbReference type="GO" id="GO:0005829">
    <property type="term" value="C:cytosol"/>
    <property type="evidence" value="ECO:0007669"/>
    <property type="project" value="TreeGrafter"/>
</dbReference>
<dbReference type="GO" id="GO:0008408">
    <property type="term" value="F:3'-5' exonuclease activity"/>
    <property type="evidence" value="ECO:0007669"/>
    <property type="project" value="TreeGrafter"/>
</dbReference>
<dbReference type="GO" id="GO:0000287">
    <property type="term" value="F:magnesium ion binding"/>
    <property type="evidence" value="ECO:0007669"/>
    <property type="project" value="UniProtKB-UniRule"/>
</dbReference>
<dbReference type="GO" id="GO:0003676">
    <property type="term" value="F:nucleic acid binding"/>
    <property type="evidence" value="ECO:0007669"/>
    <property type="project" value="InterPro"/>
</dbReference>
<dbReference type="GO" id="GO:0016896">
    <property type="term" value="F:RNA exonuclease activity, producing 5'-phosphomonoesters"/>
    <property type="evidence" value="ECO:0007669"/>
    <property type="project" value="UniProtKB-UniRule"/>
</dbReference>
<dbReference type="GO" id="GO:0045004">
    <property type="term" value="P:DNA replication proofreading"/>
    <property type="evidence" value="ECO:0007669"/>
    <property type="project" value="TreeGrafter"/>
</dbReference>
<dbReference type="GO" id="GO:0008033">
    <property type="term" value="P:tRNA processing"/>
    <property type="evidence" value="ECO:0007669"/>
    <property type="project" value="UniProtKB-KW"/>
</dbReference>
<dbReference type="CDD" id="cd06134">
    <property type="entry name" value="RNaseT"/>
    <property type="match status" value="1"/>
</dbReference>
<dbReference type="FunFam" id="3.30.420.10:FF:000009">
    <property type="entry name" value="Ribonuclease T"/>
    <property type="match status" value="1"/>
</dbReference>
<dbReference type="Gene3D" id="3.30.420.10">
    <property type="entry name" value="Ribonuclease H-like superfamily/Ribonuclease H"/>
    <property type="match status" value="1"/>
</dbReference>
<dbReference type="HAMAP" id="MF_00157">
    <property type="entry name" value="RNase_T"/>
    <property type="match status" value="1"/>
</dbReference>
<dbReference type="InterPro" id="IPR013520">
    <property type="entry name" value="Exonuclease_RNaseT/DNA_pol3"/>
</dbReference>
<dbReference type="InterPro" id="IPR005987">
    <property type="entry name" value="RNase_T"/>
</dbReference>
<dbReference type="InterPro" id="IPR012337">
    <property type="entry name" value="RNaseH-like_sf"/>
</dbReference>
<dbReference type="InterPro" id="IPR036397">
    <property type="entry name" value="RNaseH_sf"/>
</dbReference>
<dbReference type="NCBIfam" id="TIGR01298">
    <property type="entry name" value="RNaseT"/>
    <property type="match status" value="1"/>
</dbReference>
<dbReference type="PANTHER" id="PTHR30231">
    <property type="entry name" value="DNA POLYMERASE III SUBUNIT EPSILON"/>
    <property type="match status" value="1"/>
</dbReference>
<dbReference type="PANTHER" id="PTHR30231:SF2">
    <property type="entry name" value="RIBONUCLEASE T"/>
    <property type="match status" value="1"/>
</dbReference>
<dbReference type="Pfam" id="PF00929">
    <property type="entry name" value="RNase_T"/>
    <property type="match status" value="1"/>
</dbReference>
<dbReference type="SMART" id="SM00479">
    <property type="entry name" value="EXOIII"/>
    <property type="match status" value="1"/>
</dbReference>
<dbReference type="SUPFAM" id="SSF53098">
    <property type="entry name" value="Ribonuclease H-like"/>
    <property type="match status" value="1"/>
</dbReference>
<accession>A1JP36</accession>
<feature type="chain" id="PRO_1000011428" description="Ribonuclease T">
    <location>
        <begin position="1"/>
        <end position="215"/>
    </location>
</feature>
<feature type="domain" description="Exonuclease" evidence="1">
    <location>
        <begin position="20"/>
        <end position="194"/>
    </location>
</feature>
<feature type="active site" description="Proton donor/acceptor" evidence="1">
    <location>
        <position position="181"/>
    </location>
</feature>
<feature type="binding site" evidence="1">
    <location>
        <position position="23"/>
    </location>
    <ligand>
        <name>Mg(2+)</name>
        <dbReference type="ChEBI" id="CHEBI:18420"/>
        <label>1</label>
        <note>catalytic</note>
    </ligand>
</feature>
<feature type="binding site" evidence="1">
    <location>
        <position position="23"/>
    </location>
    <ligand>
        <name>Mg(2+)</name>
        <dbReference type="ChEBI" id="CHEBI:18420"/>
        <label>2</label>
        <note>catalytic</note>
    </ligand>
</feature>
<feature type="binding site" evidence="1">
    <location>
        <position position="25"/>
    </location>
    <ligand>
        <name>Mg(2+)</name>
        <dbReference type="ChEBI" id="CHEBI:18420"/>
        <label>2</label>
        <note>catalytic</note>
    </ligand>
</feature>
<feature type="binding site" evidence="1">
    <location>
        <position position="181"/>
    </location>
    <ligand>
        <name>Mg(2+)</name>
        <dbReference type="ChEBI" id="CHEBI:18420"/>
        <label>2</label>
        <note>catalytic</note>
    </ligand>
</feature>
<feature type="binding site" evidence="1">
    <location>
        <position position="186"/>
    </location>
    <ligand>
        <name>Mg(2+)</name>
        <dbReference type="ChEBI" id="CHEBI:18420"/>
        <label>2</label>
        <note>catalytic</note>
    </ligand>
</feature>
<feature type="site" description="Important for substrate binding and specificity" evidence="1">
    <location>
        <position position="29"/>
    </location>
</feature>
<feature type="site" description="Important for substrate binding and specificity" evidence="1">
    <location>
        <position position="77"/>
    </location>
</feature>
<feature type="site" description="Important for substrate binding and specificity" evidence="1">
    <location>
        <position position="124"/>
    </location>
</feature>
<feature type="site" description="Important for substrate binding and specificity" evidence="1">
    <location>
        <position position="146"/>
    </location>
</feature>
<proteinExistence type="inferred from homology"/>
<reference key="1">
    <citation type="journal article" date="2006" name="PLoS Genet.">
        <title>The complete genome sequence and comparative genome analysis of the high pathogenicity Yersinia enterocolitica strain 8081.</title>
        <authorList>
            <person name="Thomson N.R."/>
            <person name="Howard S."/>
            <person name="Wren B.W."/>
            <person name="Holden M.T.G."/>
            <person name="Crossman L."/>
            <person name="Challis G.L."/>
            <person name="Churcher C."/>
            <person name="Mungall K."/>
            <person name="Brooks K."/>
            <person name="Chillingworth T."/>
            <person name="Feltwell T."/>
            <person name="Abdellah Z."/>
            <person name="Hauser H."/>
            <person name="Jagels K."/>
            <person name="Maddison M."/>
            <person name="Moule S."/>
            <person name="Sanders M."/>
            <person name="Whitehead S."/>
            <person name="Quail M.A."/>
            <person name="Dougan G."/>
            <person name="Parkhill J."/>
            <person name="Prentice M.B."/>
        </authorList>
    </citation>
    <scope>NUCLEOTIDE SEQUENCE [LARGE SCALE GENOMIC DNA]</scope>
    <source>
        <strain>NCTC 13174 / 8081</strain>
    </source>
</reference>
<protein>
    <recommendedName>
        <fullName evidence="1">Ribonuclease T</fullName>
        <ecNumber evidence="1">3.1.13.-</ecNumber>
    </recommendedName>
    <alternativeName>
        <fullName evidence="1">Exoribonuclease T</fullName>
        <shortName evidence="1">RNase T</shortName>
    </alternativeName>
</protein>
<sequence length="215" mass="23328">MADKSDLNALSGRFRGYYPVVIDVETAGFNAQTDALLEIAAVTLQMNKDGWLLPDETLHFHVDPFEGANLEPEALAFNGIDPTNPLRGAVSEHDALHAIFKAVRKGLKEQGCNRAIIVAHNAHFDHSFVMAAAERASLKRNPFHPFATFDTAALSGLVLGQTVLAKACLTAGIPFDSSQAHSALYDTMQTAKLFCELVNRWKKLGGWPVPAGESE</sequence>
<name>RNT_YERE8</name>
<keyword id="KW-0269">Exonuclease</keyword>
<keyword id="KW-0378">Hydrolase</keyword>
<keyword id="KW-0460">Magnesium</keyword>
<keyword id="KW-0479">Metal-binding</keyword>
<keyword id="KW-0540">Nuclease</keyword>
<keyword id="KW-0819">tRNA processing</keyword>
<comment type="function">
    <text evidence="1">Trims short 3' overhangs of a variety of RNA species, leaving a one or two nucleotide 3' overhang. Responsible for the end-turnover of tRNA: specifically removes the terminal AMP residue from uncharged tRNA (tRNA-C-C-A). Also appears to be involved in tRNA biosynthesis.</text>
</comment>
<comment type="cofactor">
    <cofactor evidence="1">
        <name>Mg(2+)</name>
        <dbReference type="ChEBI" id="CHEBI:18420"/>
    </cofactor>
    <text evidence="1">Binds two Mg(2+) per subunit. The active form of the enzyme binds two Mg(2+) ions in its active site. The first Mg(2+) forms only one salt bridge with the protein.</text>
</comment>
<comment type="subunit">
    <text evidence="1">Homodimer.</text>
</comment>
<comment type="similarity">
    <text evidence="1">Belongs to the RNase T family.</text>
</comment>
<organism>
    <name type="scientific">Yersinia enterocolitica serotype O:8 / biotype 1B (strain NCTC 13174 / 8081)</name>
    <dbReference type="NCBI Taxonomy" id="393305"/>
    <lineage>
        <taxon>Bacteria</taxon>
        <taxon>Pseudomonadati</taxon>
        <taxon>Pseudomonadota</taxon>
        <taxon>Gammaproteobacteria</taxon>
        <taxon>Enterobacterales</taxon>
        <taxon>Yersiniaceae</taxon>
        <taxon>Yersinia</taxon>
    </lineage>
</organism>
<gene>
    <name evidence="1" type="primary">rnt</name>
    <name type="ordered locus">YE2154</name>
</gene>
<evidence type="ECO:0000255" key="1">
    <source>
        <dbReference type="HAMAP-Rule" id="MF_00157"/>
    </source>
</evidence>